<protein>
    <recommendedName>
        <fullName evidence="7">Phylloseptin-H9</fullName>
        <shortName evidence="7">PLS-H9</shortName>
    </recommendedName>
    <alternativeName>
        <fullName evidence="7 9">Phylloseptin-11</fullName>
        <shortName evidence="7">PLS-11</shortName>
    </alternativeName>
    <alternativeName>
        <fullName evidence="6">Phylloseptin-9</fullName>
        <shortName evidence="6">PS-9</shortName>
    </alternativeName>
</protein>
<gene>
    <name evidence="9" type="primary">psn-11</name>
</gene>
<keyword id="KW-0027">Amidation</keyword>
<keyword id="KW-0878">Amphibian defense peptide</keyword>
<keyword id="KW-0929">Antimicrobial</keyword>
<keyword id="KW-0165">Cleavage on pair of basic residues</keyword>
<keyword id="KW-0903">Direct protein sequencing</keyword>
<keyword id="KW-0964">Secreted</keyword>
<keyword id="KW-0732">Signal</keyword>
<organism>
    <name type="scientific">Pithecopus hypochondrialis</name>
    <name type="common">Orange-legged leaf frog</name>
    <name type="synonym">Phyllomedusa hypochondrialis</name>
    <dbReference type="NCBI Taxonomy" id="317381"/>
    <lineage>
        <taxon>Eukaryota</taxon>
        <taxon>Metazoa</taxon>
        <taxon>Chordata</taxon>
        <taxon>Craniata</taxon>
        <taxon>Vertebrata</taxon>
        <taxon>Euteleostomi</taxon>
        <taxon>Amphibia</taxon>
        <taxon>Batrachia</taxon>
        <taxon>Anura</taxon>
        <taxon>Neobatrachia</taxon>
        <taxon>Hyloidea</taxon>
        <taxon>Hylidae</taxon>
        <taxon>Phyllomedusinae</taxon>
        <taxon>Pithecopus</taxon>
    </lineage>
</organism>
<feature type="signal peptide" evidence="2">
    <location>
        <begin position="1"/>
        <end position="22"/>
    </location>
</feature>
<feature type="propeptide" id="PRO_0000376041" evidence="4 5">
    <location>
        <begin position="23"/>
        <end position="44"/>
    </location>
</feature>
<feature type="peptide" id="PRO_5000078228" description="Phylloseptin-H9" evidence="4 5">
    <location>
        <begin position="47"/>
        <end position="65"/>
    </location>
</feature>
<feature type="region of interest" description="Disordered" evidence="3">
    <location>
        <begin position="24"/>
        <end position="44"/>
    </location>
</feature>
<feature type="compositionally biased region" description="Acidic residues" evidence="3">
    <location>
        <begin position="30"/>
        <end position="41"/>
    </location>
</feature>
<feature type="modified residue" description="Leucine amide" evidence="4 5">
    <location>
        <position position="65"/>
    </location>
</feature>
<reference key="1">
    <citation type="journal article" date="2006" name="Peptides">
        <title>Elements of the granular gland peptidome and transcriptome persist in air-dried skin of the South American orange-legged leaf frog, Phyllomedusa hypocondrialis.</title>
        <authorList>
            <person name="Chen T."/>
            <person name="Zhou M."/>
            <person name="Gagliardo R."/>
            <person name="Walker B."/>
            <person name="Shaw C."/>
        </authorList>
    </citation>
    <scope>NUCLEOTIDE SEQUENCE [MRNA]</scope>
    <scope>PROTEIN SEQUENCE OF 47-65</scope>
    <scope>SUBCELLULAR LOCATION</scope>
    <scope>TISSUE SPECIFICITY</scope>
    <scope>MASS SPECTROMETRY</scope>
    <scope>AMIDATION AT LEU-65</scope>
    <source>
        <tissue>Skin</tissue>
        <tissue>Skin secretion</tissue>
    </source>
</reference>
<reference evidence="8" key="2">
    <citation type="submission" date="2006-07" db="UniProtKB">
        <title>High-throughput co-localization of peptides and proteins by imaging mass spectrometry.</title>
        <authorList>
            <person name="Silva L.P."/>
            <person name="Brand G.D."/>
            <person name="Bloch C. Jr."/>
        </authorList>
    </citation>
    <scope>PROTEIN SEQUENCE OF 47-65</scope>
    <scope>SUBCELLULAR LOCATION</scope>
    <scope>TISSUE SPECIFICITY</scope>
    <scope>MASS SPECTROMETRY</scope>
    <scope>AMIDATION AT LEU-65</scope>
    <source>
        <tissue evidence="5">Skin secretion</tissue>
    </source>
</reference>
<reference key="3">
    <citation type="journal article" date="2008" name="Peptides">
        <title>A consistent nomenclature of antimicrobial peptides isolated from frogs of the subfamily Phyllomedusinae.</title>
        <authorList>
            <person name="Amiche M."/>
            <person name="Ladram A."/>
            <person name="Nicolas P."/>
        </authorList>
    </citation>
    <scope>NOMENCLATURE</scope>
</reference>
<name>PLS9_PITHY</name>
<proteinExistence type="evidence at protein level"/>
<sequence length="66" mass="7446">MAFLKKSLFLVLFLGLVSLSICEEEKRETEEEENDQEEDDKSEEKRFLGLLPSIVSGAVSLVKKLG</sequence>
<comment type="function">
    <text evidence="1">Has antimicrobial activity.</text>
</comment>
<comment type="subcellular location">
    <subcellularLocation>
        <location evidence="4 5">Secreted</location>
    </subcellularLocation>
</comment>
<comment type="tissue specificity">
    <text evidence="4 5">Expressed by the skin glands.</text>
</comment>
<comment type="mass spectrometry" mass="1940.4" error="0.1" method="MALDI" evidence="5"/>
<comment type="mass spectrometry" mass="1941.16" method="MALDI" evidence="4"/>
<comment type="similarity">
    <text evidence="2">Belongs to the frog skin active peptide (FSAP) family. Phylloseptin subfamily.</text>
</comment>
<comment type="caution">
    <text evidence="8">There is a confusion with this peptide name. In the original refence Chen et al., 2006, authors attribute this sequence to Phylloseptin-9. This sequence is erroneously reproduced as 'Phylloseptin-11' in Amiche et al. 2008, in the nucleotide entry, and in the antimicrobial peptide database.</text>
</comment>
<comment type="online information" name="The antimicrobial peptide database">
    <link uri="https://wangapd3.com/database/query_output.php?ID=00976"/>
</comment>
<evidence type="ECO:0000250" key="1">
    <source>
        <dbReference type="UniProtKB" id="Q17UY9"/>
    </source>
</evidence>
<evidence type="ECO:0000255" key="2"/>
<evidence type="ECO:0000256" key="3">
    <source>
        <dbReference type="SAM" id="MobiDB-lite"/>
    </source>
</evidence>
<evidence type="ECO:0000269" key="4">
    <source>
    </source>
</evidence>
<evidence type="ECO:0000269" key="5">
    <source ref="2"/>
</evidence>
<evidence type="ECO:0000303" key="6">
    <source>
    </source>
</evidence>
<evidence type="ECO:0000303" key="7">
    <source>
    </source>
</evidence>
<evidence type="ECO:0000305" key="8"/>
<evidence type="ECO:0000312" key="9">
    <source>
        <dbReference type="EMBL" id="CAJ76138.1"/>
    </source>
</evidence>
<accession>Q0VZ38</accession>
<accession>P84905</accession>
<dbReference type="EMBL" id="AM229014">
    <property type="protein sequence ID" value="CAJ76138.1"/>
    <property type="molecule type" value="mRNA"/>
</dbReference>
<dbReference type="GO" id="GO:0005576">
    <property type="term" value="C:extracellular region"/>
    <property type="evidence" value="ECO:0007669"/>
    <property type="project" value="UniProtKB-SubCell"/>
</dbReference>
<dbReference type="GO" id="GO:0006952">
    <property type="term" value="P:defense response"/>
    <property type="evidence" value="ECO:0007669"/>
    <property type="project" value="UniProtKB-KW"/>
</dbReference>
<dbReference type="InterPro" id="IPR004275">
    <property type="entry name" value="Frog_antimicrobial_propeptide"/>
</dbReference>
<dbReference type="InterPro" id="IPR016322">
    <property type="entry name" value="FSAP"/>
</dbReference>
<dbReference type="Pfam" id="PF03032">
    <property type="entry name" value="FSAP_sig_propep"/>
    <property type="match status" value="1"/>
</dbReference>
<dbReference type="PIRSF" id="PIRSF001822">
    <property type="entry name" value="Dermaseptin_precursor"/>
    <property type="match status" value="1"/>
</dbReference>